<comment type="function">
    <text evidence="1">Catalyzes the ATP-dependent amination of UTP to CTP with either L-glutamine or ammonia as the source of nitrogen. Regulates intracellular CTP levels through interactions with the four ribonucleotide triphosphates.</text>
</comment>
<comment type="catalytic activity">
    <reaction evidence="1">
        <text>UTP + L-glutamine + ATP + H2O = CTP + L-glutamate + ADP + phosphate + 2 H(+)</text>
        <dbReference type="Rhea" id="RHEA:26426"/>
        <dbReference type="ChEBI" id="CHEBI:15377"/>
        <dbReference type="ChEBI" id="CHEBI:15378"/>
        <dbReference type="ChEBI" id="CHEBI:29985"/>
        <dbReference type="ChEBI" id="CHEBI:30616"/>
        <dbReference type="ChEBI" id="CHEBI:37563"/>
        <dbReference type="ChEBI" id="CHEBI:43474"/>
        <dbReference type="ChEBI" id="CHEBI:46398"/>
        <dbReference type="ChEBI" id="CHEBI:58359"/>
        <dbReference type="ChEBI" id="CHEBI:456216"/>
        <dbReference type="EC" id="6.3.4.2"/>
    </reaction>
</comment>
<comment type="catalytic activity">
    <reaction evidence="1">
        <text>L-glutamine + H2O = L-glutamate + NH4(+)</text>
        <dbReference type="Rhea" id="RHEA:15889"/>
        <dbReference type="ChEBI" id="CHEBI:15377"/>
        <dbReference type="ChEBI" id="CHEBI:28938"/>
        <dbReference type="ChEBI" id="CHEBI:29985"/>
        <dbReference type="ChEBI" id="CHEBI:58359"/>
    </reaction>
</comment>
<comment type="catalytic activity">
    <reaction evidence="1">
        <text>UTP + NH4(+) + ATP = CTP + ADP + phosphate + 2 H(+)</text>
        <dbReference type="Rhea" id="RHEA:16597"/>
        <dbReference type="ChEBI" id="CHEBI:15378"/>
        <dbReference type="ChEBI" id="CHEBI:28938"/>
        <dbReference type="ChEBI" id="CHEBI:30616"/>
        <dbReference type="ChEBI" id="CHEBI:37563"/>
        <dbReference type="ChEBI" id="CHEBI:43474"/>
        <dbReference type="ChEBI" id="CHEBI:46398"/>
        <dbReference type="ChEBI" id="CHEBI:456216"/>
    </reaction>
</comment>
<comment type="activity regulation">
    <text evidence="1">Allosterically activated by GTP, when glutamine is the substrate; GTP has no effect on the reaction when ammonia is the substrate. The allosteric effector GTP functions by stabilizing the protein conformation that binds the tetrahedral intermediate(s) formed during glutamine hydrolysis. Inhibited by the product CTP, via allosteric rather than competitive inhibition.</text>
</comment>
<comment type="pathway">
    <text evidence="1">Pyrimidine metabolism; CTP biosynthesis via de novo pathway; CTP from UDP: step 2/2.</text>
</comment>
<comment type="subunit">
    <text evidence="1">Homotetramer.</text>
</comment>
<comment type="miscellaneous">
    <text evidence="1">CTPSs have evolved a hybrid strategy for distinguishing between UTP and CTP. The overlapping regions of the product feedback inhibitory and substrate sites recognize a common feature in both compounds, the triphosphate moiety. To differentiate isosteric substrate and product pyrimidine rings, an additional pocket far from the expected kinase/ligase catalytic site, specifically recognizes the cytosine and ribose portions of the product inhibitor.</text>
</comment>
<comment type="similarity">
    <text evidence="1">Belongs to the CTP synthase family.</text>
</comment>
<feature type="chain" id="PRO_1000139420" description="CTP synthase">
    <location>
        <begin position="1"/>
        <end position="539"/>
    </location>
</feature>
<feature type="domain" description="Glutamine amidotransferase type-1" evidence="1">
    <location>
        <begin position="294"/>
        <end position="532"/>
    </location>
</feature>
<feature type="region of interest" description="Amidoligase domain" evidence="1">
    <location>
        <begin position="1"/>
        <end position="268"/>
    </location>
</feature>
<feature type="active site" description="Nucleophile; for glutamine hydrolysis" evidence="1">
    <location>
        <position position="380"/>
    </location>
</feature>
<feature type="active site" evidence="1">
    <location>
        <position position="505"/>
    </location>
</feature>
<feature type="active site" evidence="1">
    <location>
        <position position="507"/>
    </location>
</feature>
<feature type="binding site" evidence="1">
    <location>
        <position position="14"/>
    </location>
    <ligand>
        <name>CTP</name>
        <dbReference type="ChEBI" id="CHEBI:37563"/>
        <note>allosteric inhibitor</note>
    </ligand>
</feature>
<feature type="binding site" evidence="1">
    <location>
        <position position="14"/>
    </location>
    <ligand>
        <name>UTP</name>
        <dbReference type="ChEBI" id="CHEBI:46398"/>
    </ligand>
</feature>
<feature type="binding site" evidence="1">
    <location>
        <begin position="15"/>
        <end position="20"/>
    </location>
    <ligand>
        <name>ATP</name>
        <dbReference type="ChEBI" id="CHEBI:30616"/>
    </ligand>
</feature>
<feature type="binding site" evidence="1">
    <location>
        <position position="55"/>
    </location>
    <ligand>
        <name>L-glutamine</name>
        <dbReference type="ChEBI" id="CHEBI:58359"/>
    </ligand>
</feature>
<feature type="binding site" evidence="1">
    <location>
        <position position="72"/>
    </location>
    <ligand>
        <name>ATP</name>
        <dbReference type="ChEBI" id="CHEBI:30616"/>
    </ligand>
</feature>
<feature type="binding site" evidence="1">
    <location>
        <position position="72"/>
    </location>
    <ligand>
        <name>Mg(2+)</name>
        <dbReference type="ChEBI" id="CHEBI:18420"/>
    </ligand>
</feature>
<feature type="binding site" evidence="1">
    <location>
        <position position="142"/>
    </location>
    <ligand>
        <name>Mg(2+)</name>
        <dbReference type="ChEBI" id="CHEBI:18420"/>
    </ligand>
</feature>
<feature type="binding site" evidence="1">
    <location>
        <begin position="149"/>
        <end position="151"/>
    </location>
    <ligand>
        <name>CTP</name>
        <dbReference type="ChEBI" id="CHEBI:37563"/>
        <note>allosteric inhibitor</note>
    </ligand>
</feature>
<feature type="binding site" evidence="1">
    <location>
        <begin position="188"/>
        <end position="193"/>
    </location>
    <ligand>
        <name>CTP</name>
        <dbReference type="ChEBI" id="CHEBI:37563"/>
        <note>allosteric inhibitor</note>
    </ligand>
</feature>
<feature type="binding site" evidence="1">
    <location>
        <begin position="188"/>
        <end position="193"/>
    </location>
    <ligand>
        <name>UTP</name>
        <dbReference type="ChEBI" id="CHEBI:46398"/>
    </ligand>
</feature>
<feature type="binding site" evidence="1">
    <location>
        <position position="224"/>
    </location>
    <ligand>
        <name>CTP</name>
        <dbReference type="ChEBI" id="CHEBI:37563"/>
        <note>allosteric inhibitor</note>
    </ligand>
</feature>
<feature type="binding site" evidence="1">
    <location>
        <position position="224"/>
    </location>
    <ligand>
        <name>UTP</name>
        <dbReference type="ChEBI" id="CHEBI:46398"/>
    </ligand>
</feature>
<feature type="binding site" evidence="1">
    <location>
        <position position="353"/>
    </location>
    <ligand>
        <name>L-glutamine</name>
        <dbReference type="ChEBI" id="CHEBI:58359"/>
    </ligand>
</feature>
<feature type="binding site" evidence="1">
    <location>
        <begin position="381"/>
        <end position="384"/>
    </location>
    <ligand>
        <name>L-glutamine</name>
        <dbReference type="ChEBI" id="CHEBI:58359"/>
    </ligand>
</feature>
<feature type="binding site" evidence="1">
    <location>
        <position position="404"/>
    </location>
    <ligand>
        <name>L-glutamine</name>
        <dbReference type="ChEBI" id="CHEBI:58359"/>
    </ligand>
</feature>
<feature type="binding site" evidence="1">
    <location>
        <position position="460"/>
    </location>
    <ligand>
        <name>L-glutamine</name>
        <dbReference type="ChEBI" id="CHEBI:58359"/>
    </ligand>
</feature>
<gene>
    <name evidence="1" type="primary">pyrG</name>
    <name type="ordered locus">CTLon_0430</name>
</gene>
<sequence>MSFKSIFLTGGVVSSLGKGLTAASLALLLERQDLKVAMLKLDPYLNVDPGTMNPYEHGEVYVTDDGVETDLDLGHYHRFSSVQLSKYSIATSGQIYTKVLTKERNGEFLGSTVQVIPHVTNEIINVIQSCADHHKPDILIVEIGGTIGDIESLPFLEAVRQFRCEHPQDCLSIHMTYVPYLRAAKEIKTKPTQHSVQNLRSIGISPDVILCRSEAPLSTEVKRKISLFCNVPEHAVFNAIDLERSIYEMPLLLAKENISDFLLNKLGFSPKPLDLSDWQDLVEALCDKERQHVRIGLVGKYLEHKDAYKSVFEALFHASVPANCSLELVPIAPESEDLLEQLSQCDGCLIPGGFGTRSWEGKISAARYCREQNIPCFGICLGMQALVVEYARNVLDKPLANSMEMNPETPDPVVCMMEGQDSVVKGGTMRLGAYPCRIAPGSLASAAYKTDLVQERHRHRYEVNPSYIERLEEHGLKIAGVCPLGELCEIVEIPNHRWMLGVQFHPEFLSKLAKPHPLFIEFIRAAKAYSLEKANHEHR</sequence>
<dbReference type="EC" id="6.3.4.2" evidence="1"/>
<dbReference type="EMBL" id="AM884177">
    <property type="protein sequence ID" value="CAP06828.1"/>
    <property type="molecule type" value="Genomic_DNA"/>
</dbReference>
<dbReference type="RefSeq" id="WP_009873622.1">
    <property type="nucleotide sequence ID" value="NC_010280.2"/>
</dbReference>
<dbReference type="SMR" id="B0BBG3"/>
<dbReference type="MEROPS" id="C26.964"/>
<dbReference type="KEGG" id="ctl:CTLon_0430"/>
<dbReference type="HOGENOM" id="CLU_011675_5_0_0"/>
<dbReference type="UniPathway" id="UPA00159">
    <property type="reaction ID" value="UER00277"/>
</dbReference>
<dbReference type="Proteomes" id="UP001154401">
    <property type="component" value="Chromosome"/>
</dbReference>
<dbReference type="GO" id="GO:0005829">
    <property type="term" value="C:cytosol"/>
    <property type="evidence" value="ECO:0007669"/>
    <property type="project" value="TreeGrafter"/>
</dbReference>
<dbReference type="GO" id="GO:0005524">
    <property type="term" value="F:ATP binding"/>
    <property type="evidence" value="ECO:0007669"/>
    <property type="project" value="UniProtKB-KW"/>
</dbReference>
<dbReference type="GO" id="GO:0003883">
    <property type="term" value="F:CTP synthase activity"/>
    <property type="evidence" value="ECO:0007669"/>
    <property type="project" value="UniProtKB-UniRule"/>
</dbReference>
<dbReference type="GO" id="GO:0004359">
    <property type="term" value="F:glutaminase activity"/>
    <property type="evidence" value="ECO:0007669"/>
    <property type="project" value="RHEA"/>
</dbReference>
<dbReference type="GO" id="GO:0042802">
    <property type="term" value="F:identical protein binding"/>
    <property type="evidence" value="ECO:0007669"/>
    <property type="project" value="TreeGrafter"/>
</dbReference>
<dbReference type="GO" id="GO:0046872">
    <property type="term" value="F:metal ion binding"/>
    <property type="evidence" value="ECO:0007669"/>
    <property type="project" value="UniProtKB-KW"/>
</dbReference>
<dbReference type="GO" id="GO:0044210">
    <property type="term" value="P:'de novo' CTP biosynthetic process"/>
    <property type="evidence" value="ECO:0007669"/>
    <property type="project" value="UniProtKB-UniRule"/>
</dbReference>
<dbReference type="GO" id="GO:0019856">
    <property type="term" value="P:pyrimidine nucleobase biosynthetic process"/>
    <property type="evidence" value="ECO:0007669"/>
    <property type="project" value="TreeGrafter"/>
</dbReference>
<dbReference type="CDD" id="cd03113">
    <property type="entry name" value="CTPS_N"/>
    <property type="match status" value="1"/>
</dbReference>
<dbReference type="CDD" id="cd01746">
    <property type="entry name" value="GATase1_CTP_Synthase"/>
    <property type="match status" value="1"/>
</dbReference>
<dbReference type="FunFam" id="3.40.50.300:FF:000009">
    <property type="entry name" value="CTP synthase"/>
    <property type="match status" value="1"/>
</dbReference>
<dbReference type="FunFam" id="3.40.50.880:FF:000002">
    <property type="entry name" value="CTP synthase"/>
    <property type="match status" value="1"/>
</dbReference>
<dbReference type="Gene3D" id="3.40.50.880">
    <property type="match status" value="1"/>
</dbReference>
<dbReference type="Gene3D" id="3.40.50.300">
    <property type="entry name" value="P-loop containing nucleotide triphosphate hydrolases"/>
    <property type="match status" value="1"/>
</dbReference>
<dbReference type="HAMAP" id="MF_01227">
    <property type="entry name" value="PyrG"/>
    <property type="match status" value="1"/>
</dbReference>
<dbReference type="InterPro" id="IPR029062">
    <property type="entry name" value="Class_I_gatase-like"/>
</dbReference>
<dbReference type="InterPro" id="IPR004468">
    <property type="entry name" value="CTP_synthase"/>
</dbReference>
<dbReference type="InterPro" id="IPR017456">
    <property type="entry name" value="CTP_synthase_N"/>
</dbReference>
<dbReference type="InterPro" id="IPR017926">
    <property type="entry name" value="GATASE"/>
</dbReference>
<dbReference type="InterPro" id="IPR033828">
    <property type="entry name" value="GATase1_CTP_Synthase"/>
</dbReference>
<dbReference type="InterPro" id="IPR027417">
    <property type="entry name" value="P-loop_NTPase"/>
</dbReference>
<dbReference type="NCBIfam" id="NF003792">
    <property type="entry name" value="PRK05380.1"/>
    <property type="match status" value="1"/>
</dbReference>
<dbReference type="NCBIfam" id="TIGR00337">
    <property type="entry name" value="PyrG"/>
    <property type="match status" value="1"/>
</dbReference>
<dbReference type="PANTHER" id="PTHR11550">
    <property type="entry name" value="CTP SYNTHASE"/>
    <property type="match status" value="1"/>
</dbReference>
<dbReference type="PANTHER" id="PTHR11550:SF0">
    <property type="entry name" value="CTP SYNTHASE-RELATED"/>
    <property type="match status" value="1"/>
</dbReference>
<dbReference type="Pfam" id="PF06418">
    <property type="entry name" value="CTP_synth_N"/>
    <property type="match status" value="1"/>
</dbReference>
<dbReference type="Pfam" id="PF00117">
    <property type="entry name" value="GATase"/>
    <property type="match status" value="1"/>
</dbReference>
<dbReference type="SUPFAM" id="SSF52317">
    <property type="entry name" value="Class I glutamine amidotransferase-like"/>
    <property type="match status" value="1"/>
</dbReference>
<dbReference type="SUPFAM" id="SSF52540">
    <property type="entry name" value="P-loop containing nucleoside triphosphate hydrolases"/>
    <property type="match status" value="1"/>
</dbReference>
<dbReference type="PROSITE" id="PS51273">
    <property type="entry name" value="GATASE_TYPE_1"/>
    <property type="match status" value="1"/>
</dbReference>
<name>PYRG_CHLTB</name>
<organism>
    <name type="scientific">Chlamydia trachomatis serovar L2b (strain UCH-1/proctitis)</name>
    <dbReference type="NCBI Taxonomy" id="471473"/>
    <lineage>
        <taxon>Bacteria</taxon>
        <taxon>Pseudomonadati</taxon>
        <taxon>Chlamydiota</taxon>
        <taxon>Chlamydiia</taxon>
        <taxon>Chlamydiales</taxon>
        <taxon>Chlamydiaceae</taxon>
        <taxon>Chlamydia/Chlamydophila group</taxon>
        <taxon>Chlamydia</taxon>
    </lineage>
</organism>
<accession>B0BBG3</accession>
<reference key="1">
    <citation type="journal article" date="2008" name="Genome Res.">
        <title>Chlamydia trachomatis: genome sequence analysis of lymphogranuloma venereum isolates.</title>
        <authorList>
            <person name="Thomson N.R."/>
            <person name="Holden M.T.G."/>
            <person name="Carder C."/>
            <person name="Lennard N."/>
            <person name="Lockey S.J."/>
            <person name="Marsh P."/>
            <person name="Skipp P."/>
            <person name="O'Connor C.D."/>
            <person name="Goodhead I."/>
            <person name="Norbertzcak H."/>
            <person name="Harris B."/>
            <person name="Ormond D."/>
            <person name="Rance R."/>
            <person name="Quail M.A."/>
            <person name="Parkhill J."/>
            <person name="Stephens R.S."/>
            <person name="Clarke I.N."/>
        </authorList>
    </citation>
    <scope>NUCLEOTIDE SEQUENCE [LARGE SCALE GENOMIC DNA]</scope>
    <source>
        <strain>UCH-1/proctitis</strain>
    </source>
</reference>
<evidence type="ECO:0000255" key="1">
    <source>
        <dbReference type="HAMAP-Rule" id="MF_01227"/>
    </source>
</evidence>
<protein>
    <recommendedName>
        <fullName evidence="1">CTP synthase</fullName>
        <ecNumber evidence="1">6.3.4.2</ecNumber>
    </recommendedName>
    <alternativeName>
        <fullName evidence="1">Cytidine 5'-triphosphate synthase</fullName>
    </alternativeName>
    <alternativeName>
        <fullName evidence="1">Cytidine triphosphate synthetase</fullName>
        <shortName evidence="1">CTP synthetase</shortName>
        <shortName evidence="1">CTPS</shortName>
    </alternativeName>
    <alternativeName>
        <fullName evidence="1">UTP--ammonia ligase</fullName>
    </alternativeName>
</protein>
<keyword id="KW-0067">ATP-binding</keyword>
<keyword id="KW-0315">Glutamine amidotransferase</keyword>
<keyword id="KW-0436">Ligase</keyword>
<keyword id="KW-0460">Magnesium</keyword>
<keyword id="KW-0479">Metal-binding</keyword>
<keyword id="KW-0547">Nucleotide-binding</keyword>
<keyword id="KW-0665">Pyrimidine biosynthesis</keyword>
<proteinExistence type="inferred from homology"/>